<evidence type="ECO:0000255" key="1">
    <source>
        <dbReference type="HAMAP-Rule" id="MF_00502"/>
    </source>
</evidence>
<evidence type="ECO:0000305" key="2"/>
<proteinExistence type="inferred from homology"/>
<name>RL31B_BURP1</name>
<reference key="1">
    <citation type="journal article" date="2010" name="Genome Biol. Evol.">
        <title>Continuing evolution of Burkholderia mallei through genome reduction and large-scale rearrangements.</title>
        <authorList>
            <person name="Losada L."/>
            <person name="Ronning C.M."/>
            <person name="DeShazer D."/>
            <person name="Woods D."/>
            <person name="Fedorova N."/>
            <person name="Kim H.S."/>
            <person name="Shabalina S.A."/>
            <person name="Pearson T.R."/>
            <person name="Brinkac L."/>
            <person name="Tan P."/>
            <person name="Nandi T."/>
            <person name="Crabtree J."/>
            <person name="Badger J."/>
            <person name="Beckstrom-Sternberg S."/>
            <person name="Saqib M."/>
            <person name="Schutzer S.E."/>
            <person name="Keim P."/>
            <person name="Nierman W.C."/>
        </authorList>
    </citation>
    <scope>NUCLEOTIDE SEQUENCE [LARGE SCALE GENOMIC DNA]</scope>
    <source>
        <strain>1710b</strain>
    </source>
</reference>
<comment type="subunit">
    <text evidence="1">Part of the 50S ribosomal subunit.</text>
</comment>
<comment type="similarity">
    <text evidence="1">Belongs to the bacterial ribosomal protein bL31 family. Type B subfamily.</text>
</comment>
<comment type="sequence caution" evidence="2">
    <conflict type="erroneous initiation">
        <sequence resource="EMBL-CDS" id="ABA50687"/>
    </conflict>
</comment>
<dbReference type="EMBL" id="CP000124">
    <property type="protein sequence ID" value="ABA50687.1"/>
    <property type="status" value="ALT_INIT"/>
    <property type="molecule type" value="Genomic_DNA"/>
</dbReference>
<dbReference type="RefSeq" id="WP_004193070.1">
    <property type="nucleotide sequence ID" value="NC_007434.1"/>
</dbReference>
<dbReference type="SMR" id="Q3JRM8"/>
<dbReference type="EnsemblBacteria" id="ABA50687">
    <property type="protein sequence ID" value="ABA50687"/>
    <property type="gene ID" value="BURPS1710b_2380"/>
</dbReference>
<dbReference type="KEGG" id="bpm:BURPS1710b_2380"/>
<dbReference type="HOGENOM" id="CLU_114306_2_1_4"/>
<dbReference type="Proteomes" id="UP000002700">
    <property type="component" value="Chromosome I"/>
</dbReference>
<dbReference type="GO" id="GO:1990904">
    <property type="term" value="C:ribonucleoprotein complex"/>
    <property type="evidence" value="ECO:0007669"/>
    <property type="project" value="UniProtKB-KW"/>
</dbReference>
<dbReference type="GO" id="GO:0005840">
    <property type="term" value="C:ribosome"/>
    <property type="evidence" value="ECO:0007669"/>
    <property type="project" value="UniProtKB-KW"/>
</dbReference>
<dbReference type="GO" id="GO:0003735">
    <property type="term" value="F:structural constituent of ribosome"/>
    <property type="evidence" value="ECO:0007669"/>
    <property type="project" value="InterPro"/>
</dbReference>
<dbReference type="GO" id="GO:0006412">
    <property type="term" value="P:translation"/>
    <property type="evidence" value="ECO:0007669"/>
    <property type="project" value="UniProtKB-UniRule"/>
</dbReference>
<dbReference type="Gene3D" id="4.10.830.30">
    <property type="entry name" value="Ribosomal protein L31"/>
    <property type="match status" value="1"/>
</dbReference>
<dbReference type="HAMAP" id="MF_00502">
    <property type="entry name" value="Ribosomal_bL31_2"/>
    <property type="match status" value="1"/>
</dbReference>
<dbReference type="InterPro" id="IPR034704">
    <property type="entry name" value="Ribosomal_bL28/bL31-like_sf"/>
</dbReference>
<dbReference type="InterPro" id="IPR002150">
    <property type="entry name" value="Ribosomal_bL31"/>
</dbReference>
<dbReference type="InterPro" id="IPR027493">
    <property type="entry name" value="Ribosomal_bL31_B"/>
</dbReference>
<dbReference type="InterPro" id="IPR042105">
    <property type="entry name" value="Ribosomal_bL31_sf"/>
</dbReference>
<dbReference type="NCBIfam" id="TIGR00105">
    <property type="entry name" value="L31"/>
    <property type="match status" value="1"/>
</dbReference>
<dbReference type="NCBIfam" id="NF002462">
    <property type="entry name" value="PRK01678.1"/>
    <property type="match status" value="1"/>
</dbReference>
<dbReference type="PANTHER" id="PTHR33280">
    <property type="entry name" value="50S RIBOSOMAL PROTEIN L31, CHLOROPLASTIC"/>
    <property type="match status" value="1"/>
</dbReference>
<dbReference type="PANTHER" id="PTHR33280:SF1">
    <property type="entry name" value="LARGE RIBOSOMAL SUBUNIT PROTEIN BL31C"/>
    <property type="match status" value="1"/>
</dbReference>
<dbReference type="Pfam" id="PF01197">
    <property type="entry name" value="Ribosomal_L31"/>
    <property type="match status" value="1"/>
</dbReference>
<dbReference type="PRINTS" id="PR01249">
    <property type="entry name" value="RIBOSOMALL31"/>
</dbReference>
<dbReference type="SUPFAM" id="SSF143800">
    <property type="entry name" value="L28p-like"/>
    <property type="match status" value="1"/>
</dbReference>
<keyword id="KW-0687">Ribonucleoprotein</keyword>
<keyword id="KW-0689">Ribosomal protein</keyword>
<organism>
    <name type="scientific">Burkholderia pseudomallei (strain 1710b)</name>
    <dbReference type="NCBI Taxonomy" id="320372"/>
    <lineage>
        <taxon>Bacteria</taxon>
        <taxon>Pseudomonadati</taxon>
        <taxon>Pseudomonadota</taxon>
        <taxon>Betaproteobacteria</taxon>
        <taxon>Burkholderiales</taxon>
        <taxon>Burkholderiaceae</taxon>
        <taxon>Burkholderia</taxon>
        <taxon>pseudomallei group</taxon>
    </lineage>
</organism>
<feature type="chain" id="PRO_0000259103" description="Large ribosomal subunit protein bL31B">
    <location>
        <begin position="1"/>
        <end position="87"/>
    </location>
</feature>
<protein>
    <recommendedName>
        <fullName evidence="1">Large ribosomal subunit protein bL31B</fullName>
    </recommendedName>
    <alternativeName>
        <fullName evidence="2">50S ribosomal protein L31 type B</fullName>
    </alternativeName>
</protein>
<accession>Q3JRM8</accession>
<gene>
    <name evidence="1" type="primary">rpmE2</name>
    <name type="ordered locus">BURPS1710b_2380</name>
</gene>
<sequence length="87" mass="9912">MKQGIHPDYREVVFQDMSNGFKFITRSTIQTRETIEFEGKTYPLAKIEVSSESHSFYTGQQKIMDTAGRVEKFKNKFGARASGKAAK</sequence>